<reference key="1">
    <citation type="journal article" date="2006" name="J. Bacteriol.">
        <title>Complete genome sequence of Yersinia pestis strains Antiqua and Nepal516: evidence of gene reduction in an emerging pathogen.</title>
        <authorList>
            <person name="Chain P.S.G."/>
            <person name="Hu P."/>
            <person name="Malfatti S.A."/>
            <person name="Radnedge L."/>
            <person name="Larimer F."/>
            <person name="Vergez L.M."/>
            <person name="Worsham P."/>
            <person name="Chu M.C."/>
            <person name="Andersen G.L."/>
        </authorList>
    </citation>
    <scope>NUCLEOTIDE SEQUENCE [LARGE SCALE GENOMIC DNA]</scope>
    <source>
        <strain>Antiqua</strain>
    </source>
</reference>
<sequence length="466" mass="52074">MSVVPVVDVLQGRAAVGSEVTVRGWVRTRRDSKAGISFVAVYDGSCFDPLQAVVNNTLPNYQDEVLHLTTGCSVEVTGTVVASPGEGQSFEIQATAINVVGWVDDPDTYPMAAKRHSIEYLREVAHLRPRTNLIGAVARVRHTLAQAIHRFFDENGYFWVSTPLITASDTEGAGEMFRVSTLDLENLPRTDTGAVDFSEDFFGKEAFLTVSGQLNGETYACALSKVYTFGPTFRAENSNTSRHLAEFWMVEPEVAFASLDDVAGLAEKMLKYVFQAVLNERADDMKFFAERVDKDAVDRLQRFVTSDFAQVDYTDAIEILLASGQKFENDVSWGIDLSSEHERYLAEKHFKAPVVVKNYPKDIKAFYMRMNEDGKTVAAMDVLAPGIGEIIGGSQREERLDVLDARLAEMGLNKEDYWWYRDLRRYGTVPHSGFGLGFERLISYVTGVQNVRDVIPFPRTPRNASF</sequence>
<gene>
    <name evidence="1" type="primary">asnS</name>
    <name type="ordered locus">YPA_0707</name>
</gene>
<comment type="catalytic activity">
    <reaction evidence="1">
        <text>tRNA(Asn) + L-asparagine + ATP = L-asparaginyl-tRNA(Asn) + AMP + diphosphate + H(+)</text>
        <dbReference type="Rhea" id="RHEA:11180"/>
        <dbReference type="Rhea" id="RHEA-COMP:9659"/>
        <dbReference type="Rhea" id="RHEA-COMP:9674"/>
        <dbReference type="ChEBI" id="CHEBI:15378"/>
        <dbReference type="ChEBI" id="CHEBI:30616"/>
        <dbReference type="ChEBI" id="CHEBI:33019"/>
        <dbReference type="ChEBI" id="CHEBI:58048"/>
        <dbReference type="ChEBI" id="CHEBI:78442"/>
        <dbReference type="ChEBI" id="CHEBI:78515"/>
        <dbReference type="ChEBI" id="CHEBI:456215"/>
        <dbReference type="EC" id="6.1.1.22"/>
    </reaction>
</comment>
<comment type="subunit">
    <text evidence="1">Homodimer.</text>
</comment>
<comment type="subcellular location">
    <subcellularLocation>
        <location>Cytoplasm</location>
    </subcellularLocation>
</comment>
<comment type="similarity">
    <text evidence="1">Belongs to the class-II aminoacyl-tRNA synthetase family.</text>
</comment>
<accession>Q1CA47</accession>
<name>SYN_YERPA</name>
<organism>
    <name type="scientific">Yersinia pestis bv. Antiqua (strain Antiqua)</name>
    <dbReference type="NCBI Taxonomy" id="360102"/>
    <lineage>
        <taxon>Bacteria</taxon>
        <taxon>Pseudomonadati</taxon>
        <taxon>Pseudomonadota</taxon>
        <taxon>Gammaproteobacteria</taxon>
        <taxon>Enterobacterales</taxon>
        <taxon>Yersiniaceae</taxon>
        <taxon>Yersinia</taxon>
    </lineage>
</organism>
<proteinExistence type="inferred from homology"/>
<dbReference type="EC" id="6.1.1.22" evidence="1"/>
<dbReference type="EMBL" id="CP000308">
    <property type="protein sequence ID" value="ABG12675.1"/>
    <property type="molecule type" value="Genomic_DNA"/>
</dbReference>
<dbReference type="RefSeq" id="WP_002211301.1">
    <property type="nucleotide sequence ID" value="NZ_CP009906.1"/>
</dbReference>
<dbReference type="SMR" id="Q1CA47"/>
<dbReference type="GeneID" id="96665013"/>
<dbReference type="KEGG" id="ypa:YPA_0707"/>
<dbReference type="Proteomes" id="UP000001971">
    <property type="component" value="Chromosome"/>
</dbReference>
<dbReference type="GO" id="GO:0005737">
    <property type="term" value="C:cytoplasm"/>
    <property type="evidence" value="ECO:0007669"/>
    <property type="project" value="UniProtKB-SubCell"/>
</dbReference>
<dbReference type="GO" id="GO:0004816">
    <property type="term" value="F:asparagine-tRNA ligase activity"/>
    <property type="evidence" value="ECO:0007669"/>
    <property type="project" value="UniProtKB-UniRule"/>
</dbReference>
<dbReference type="GO" id="GO:0005524">
    <property type="term" value="F:ATP binding"/>
    <property type="evidence" value="ECO:0007669"/>
    <property type="project" value="UniProtKB-UniRule"/>
</dbReference>
<dbReference type="GO" id="GO:0003676">
    <property type="term" value="F:nucleic acid binding"/>
    <property type="evidence" value="ECO:0007669"/>
    <property type="project" value="InterPro"/>
</dbReference>
<dbReference type="GO" id="GO:0006421">
    <property type="term" value="P:asparaginyl-tRNA aminoacylation"/>
    <property type="evidence" value="ECO:0007669"/>
    <property type="project" value="UniProtKB-UniRule"/>
</dbReference>
<dbReference type="CDD" id="cd00776">
    <property type="entry name" value="AsxRS_core"/>
    <property type="match status" value="1"/>
</dbReference>
<dbReference type="CDD" id="cd04318">
    <property type="entry name" value="EcAsnRS_like_N"/>
    <property type="match status" value="1"/>
</dbReference>
<dbReference type="FunFam" id="3.30.930.10:FF:000016">
    <property type="entry name" value="Asparagine--tRNA ligase"/>
    <property type="match status" value="1"/>
</dbReference>
<dbReference type="Gene3D" id="3.30.930.10">
    <property type="entry name" value="Bira Bifunctional Protein, Domain 2"/>
    <property type="match status" value="1"/>
</dbReference>
<dbReference type="Gene3D" id="2.40.50.140">
    <property type="entry name" value="Nucleic acid-binding proteins"/>
    <property type="match status" value="1"/>
</dbReference>
<dbReference type="HAMAP" id="MF_00534">
    <property type="entry name" value="Asn_tRNA_synth"/>
    <property type="match status" value="1"/>
</dbReference>
<dbReference type="InterPro" id="IPR004364">
    <property type="entry name" value="Aa-tRNA-synt_II"/>
</dbReference>
<dbReference type="InterPro" id="IPR006195">
    <property type="entry name" value="aa-tRNA-synth_II"/>
</dbReference>
<dbReference type="InterPro" id="IPR045864">
    <property type="entry name" value="aa-tRNA-synth_II/BPL/LPL"/>
</dbReference>
<dbReference type="InterPro" id="IPR004522">
    <property type="entry name" value="Asn-tRNA-ligase"/>
</dbReference>
<dbReference type="InterPro" id="IPR002312">
    <property type="entry name" value="Asp/Asn-tRNA-synth_IIb"/>
</dbReference>
<dbReference type="InterPro" id="IPR012340">
    <property type="entry name" value="NA-bd_OB-fold"/>
</dbReference>
<dbReference type="InterPro" id="IPR004365">
    <property type="entry name" value="NA-bd_OB_tRNA"/>
</dbReference>
<dbReference type="NCBIfam" id="TIGR00457">
    <property type="entry name" value="asnS"/>
    <property type="match status" value="1"/>
</dbReference>
<dbReference type="NCBIfam" id="NF003037">
    <property type="entry name" value="PRK03932.1"/>
    <property type="match status" value="1"/>
</dbReference>
<dbReference type="PANTHER" id="PTHR22594:SF34">
    <property type="entry name" value="ASPARAGINE--TRNA LIGASE, MITOCHONDRIAL-RELATED"/>
    <property type="match status" value="1"/>
</dbReference>
<dbReference type="PANTHER" id="PTHR22594">
    <property type="entry name" value="ASPARTYL/LYSYL-TRNA SYNTHETASE"/>
    <property type="match status" value="1"/>
</dbReference>
<dbReference type="Pfam" id="PF00152">
    <property type="entry name" value="tRNA-synt_2"/>
    <property type="match status" value="1"/>
</dbReference>
<dbReference type="Pfam" id="PF01336">
    <property type="entry name" value="tRNA_anti-codon"/>
    <property type="match status" value="1"/>
</dbReference>
<dbReference type="PRINTS" id="PR01042">
    <property type="entry name" value="TRNASYNTHASP"/>
</dbReference>
<dbReference type="SUPFAM" id="SSF55681">
    <property type="entry name" value="Class II aaRS and biotin synthetases"/>
    <property type="match status" value="1"/>
</dbReference>
<dbReference type="SUPFAM" id="SSF50249">
    <property type="entry name" value="Nucleic acid-binding proteins"/>
    <property type="match status" value="1"/>
</dbReference>
<dbReference type="PROSITE" id="PS50862">
    <property type="entry name" value="AA_TRNA_LIGASE_II"/>
    <property type="match status" value="1"/>
</dbReference>
<keyword id="KW-0030">Aminoacyl-tRNA synthetase</keyword>
<keyword id="KW-0067">ATP-binding</keyword>
<keyword id="KW-0963">Cytoplasm</keyword>
<keyword id="KW-0436">Ligase</keyword>
<keyword id="KW-0547">Nucleotide-binding</keyword>
<keyword id="KW-0648">Protein biosynthesis</keyword>
<evidence type="ECO:0000255" key="1">
    <source>
        <dbReference type="HAMAP-Rule" id="MF_00534"/>
    </source>
</evidence>
<protein>
    <recommendedName>
        <fullName evidence="1">Asparagine--tRNA ligase</fullName>
        <ecNumber evidence="1">6.1.1.22</ecNumber>
    </recommendedName>
    <alternativeName>
        <fullName evidence="1">Asparaginyl-tRNA synthetase</fullName>
        <shortName evidence="1">AsnRS</shortName>
    </alternativeName>
</protein>
<feature type="chain" id="PRO_1000051460" description="Asparagine--tRNA ligase">
    <location>
        <begin position="1"/>
        <end position="466"/>
    </location>
</feature>